<reference key="1">
    <citation type="submission" date="2007-08" db="EMBL/GenBank/DDBJ databases">
        <authorList>
            <consortium name="The Vibrio harveyi Genome Sequencing Project"/>
            <person name="Bassler B."/>
            <person name="Clifton S.W."/>
            <person name="Fulton L."/>
            <person name="Delehaunty K."/>
            <person name="Fronick C."/>
            <person name="Harrison M."/>
            <person name="Markivic C."/>
            <person name="Fulton R."/>
            <person name="Tin-Wollam A.-M."/>
            <person name="Shah N."/>
            <person name="Pepin K."/>
            <person name="Nash W."/>
            <person name="Thiruvilangam P."/>
            <person name="Bhonagiri V."/>
            <person name="Waters C."/>
            <person name="Tu K.C."/>
            <person name="Irgon J."/>
            <person name="Wilson R.K."/>
        </authorList>
    </citation>
    <scope>NUCLEOTIDE SEQUENCE [LARGE SCALE GENOMIC DNA]</scope>
    <source>
        <strain>ATCC BAA-1116 / BB120</strain>
    </source>
</reference>
<sequence length="276" mass="30429">MHFHFSKMHGLGNDFMVVDCITQNVFFSQDLIRRLADRHTGVGFDQLLVVEAPYDPETDFHYRIFNADGSEVEQCGNGARCFARFVRLKGLTNRYSISVSTKKGKMILDVEDDGEVTVNMGVPEFEPNKIPFKAKQKEKTYIMRAGDKTLFCGAVSMGNPHVVTVVDDVDTAEVETLGPLLESHERFPERVNAGFMQVVNRNHIRLRVYERGAGETQACGSGACGAVAVGILQGLLDENVKVSLPGGDLRISWQGPGKPLFMTGPATHVFDGQLSC</sequence>
<accession>A7N0W0</accession>
<keyword id="KW-0028">Amino-acid biosynthesis</keyword>
<keyword id="KW-0963">Cytoplasm</keyword>
<keyword id="KW-0413">Isomerase</keyword>
<keyword id="KW-0457">Lysine biosynthesis</keyword>
<proteinExistence type="inferred from homology"/>
<feature type="chain" id="PRO_1000011982" description="Diaminopimelate epimerase">
    <location>
        <begin position="1"/>
        <end position="276"/>
    </location>
</feature>
<feature type="active site" description="Proton donor" evidence="1">
    <location>
        <position position="75"/>
    </location>
</feature>
<feature type="active site" description="Proton acceptor" evidence="1">
    <location>
        <position position="219"/>
    </location>
</feature>
<feature type="binding site" evidence="1">
    <location>
        <position position="13"/>
    </location>
    <ligand>
        <name>substrate</name>
    </ligand>
</feature>
<feature type="binding site" evidence="1">
    <location>
        <position position="46"/>
    </location>
    <ligand>
        <name>substrate</name>
    </ligand>
</feature>
<feature type="binding site" evidence="1">
    <location>
        <position position="66"/>
    </location>
    <ligand>
        <name>substrate</name>
    </ligand>
</feature>
<feature type="binding site" evidence="1">
    <location>
        <begin position="76"/>
        <end position="77"/>
    </location>
    <ligand>
        <name>substrate</name>
    </ligand>
</feature>
<feature type="binding site" evidence="1">
    <location>
        <position position="159"/>
    </location>
    <ligand>
        <name>substrate</name>
    </ligand>
</feature>
<feature type="binding site" evidence="1">
    <location>
        <position position="192"/>
    </location>
    <ligand>
        <name>substrate</name>
    </ligand>
</feature>
<feature type="binding site" evidence="1">
    <location>
        <begin position="210"/>
        <end position="211"/>
    </location>
    <ligand>
        <name>substrate</name>
    </ligand>
</feature>
<feature type="binding site" evidence="1">
    <location>
        <begin position="220"/>
        <end position="221"/>
    </location>
    <ligand>
        <name>substrate</name>
    </ligand>
</feature>
<feature type="site" description="Could be important to modulate the pK values of the two catalytic cysteine residues" evidence="1">
    <location>
        <position position="161"/>
    </location>
</feature>
<feature type="site" description="Could be important to modulate the pK values of the two catalytic cysteine residues" evidence="1">
    <location>
        <position position="210"/>
    </location>
</feature>
<feature type="site" description="Important for dimerization" evidence="1">
    <location>
        <position position="270"/>
    </location>
</feature>
<dbReference type="EC" id="5.1.1.7" evidence="1"/>
<dbReference type="EMBL" id="CP000789">
    <property type="protein sequence ID" value="ABU69337.1"/>
    <property type="molecule type" value="Genomic_DNA"/>
</dbReference>
<dbReference type="RefSeq" id="WP_012126593.1">
    <property type="nucleotide sequence ID" value="NC_022269.1"/>
</dbReference>
<dbReference type="SMR" id="A7N0W0"/>
<dbReference type="GeneID" id="83583463"/>
<dbReference type="KEGG" id="vha:VIBHAR_00309"/>
<dbReference type="PATRIC" id="fig|338187.25.peg.2260"/>
<dbReference type="UniPathway" id="UPA00034">
    <property type="reaction ID" value="UER00025"/>
</dbReference>
<dbReference type="Proteomes" id="UP000008152">
    <property type="component" value="Chromosome I"/>
</dbReference>
<dbReference type="GO" id="GO:0005829">
    <property type="term" value="C:cytosol"/>
    <property type="evidence" value="ECO:0007669"/>
    <property type="project" value="TreeGrafter"/>
</dbReference>
<dbReference type="GO" id="GO:0008837">
    <property type="term" value="F:diaminopimelate epimerase activity"/>
    <property type="evidence" value="ECO:0007669"/>
    <property type="project" value="UniProtKB-UniRule"/>
</dbReference>
<dbReference type="GO" id="GO:0009089">
    <property type="term" value="P:lysine biosynthetic process via diaminopimelate"/>
    <property type="evidence" value="ECO:0007669"/>
    <property type="project" value="UniProtKB-UniRule"/>
</dbReference>
<dbReference type="FunFam" id="3.10.310.10:FF:000001">
    <property type="entry name" value="Diaminopimelate epimerase"/>
    <property type="match status" value="1"/>
</dbReference>
<dbReference type="FunFam" id="3.10.310.10:FF:000002">
    <property type="entry name" value="Diaminopimelate epimerase"/>
    <property type="match status" value="1"/>
</dbReference>
<dbReference type="Gene3D" id="3.10.310.10">
    <property type="entry name" value="Diaminopimelate Epimerase, Chain A, domain 1"/>
    <property type="match status" value="2"/>
</dbReference>
<dbReference type="HAMAP" id="MF_00197">
    <property type="entry name" value="DAP_epimerase"/>
    <property type="match status" value="1"/>
</dbReference>
<dbReference type="InterPro" id="IPR018510">
    <property type="entry name" value="DAP_epimerase_AS"/>
</dbReference>
<dbReference type="InterPro" id="IPR001653">
    <property type="entry name" value="DAP_epimerase_DapF"/>
</dbReference>
<dbReference type="NCBIfam" id="TIGR00652">
    <property type="entry name" value="DapF"/>
    <property type="match status" value="1"/>
</dbReference>
<dbReference type="PANTHER" id="PTHR31689:SF0">
    <property type="entry name" value="DIAMINOPIMELATE EPIMERASE"/>
    <property type="match status" value="1"/>
</dbReference>
<dbReference type="PANTHER" id="PTHR31689">
    <property type="entry name" value="DIAMINOPIMELATE EPIMERASE, CHLOROPLASTIC"/>
    <property type="match status" value="1"/>
</dbReference>
<dbReference type="Pfam" id="PF01678">
    <property type="entry name" value="DAP_epimerase"/>
    <property type="match status" value="2"/>
</dbReference>
<dbReference type="SUPFAM" id="SSF54506">
    <property type="entry name" value="Diaminopimelate epimerase-like"/>
    <property type="match status" value="1"/>
</dbReference>
<dbReference type="PROSITE" id="PS01326">
    <property type="entry name" value="DAP_EPIMERASE"/>
    <property type="match status" value="1"/>
</dbReference>
<evidence type="ECO:0000255" key="1">
    <source>
        <dbReference type="HAMAP-Rule" id="MF_00197"/>
    </source>
</evidence>
<protein>
    <recommendedName>
        <fullName evidence="1">Diaminopimelate epimerase</fullName>
        <shortName evidence="1">DAP epimerase</shortName>
        <ecNumber evidence="1">5.1.1.7</ecNumber>
    </recommendedName>
    <alternativeName>
        <fullName evidence="1">PLP-independent amino acid racemase</fullName>
    </alternativeName>
</protein>
<organism>
    <name type="scientific">Vibrio campbellii (strain ATCC BAA-1116)</name>
    <dbReference type="NCBI Taxonomy" id="2902295"/>
    <lineage>
        <taxon>Bacteria</taxon>
        <taxon>Pseudomonadati</taxon>
        <taxon>Pseudomonadota</taxon>
        <taxon>Gammaproteobacteria</taxon>
        <taxon>Vibrionales</taxon>
        <taxon>Vibrionaceae</taxon>
        <taxon>Vibrio</taxon>
    </lineage>
</organism>
<comment type="function">
    <text evidence="1">Catalyzes the stereoinversion of LL-2,6-diaminopimelate (L,L-DAP) to meso-diaminopimelate (meso-DAP), a precursor of L-lysine and an essential component of the bacterial peptidoglycan.</text>
</comment>
<comment type="catalytic activity">
    <reaction evidence="1">
        <text>(2S,6S)-2,6-diaminopimelate = meso-2,6-diaminopimelate</text>
        <dbReference type="Rhea" id="RHEA:15393"/>
        <dbReference type="ChEBI" id="CHEBI:57609"/>
        <dbReference type="ChEBI" id="CHEBI:57791"/>
        <dbReference type="EC" id="5.1.1.7"/>
    </reaction>
</comment>
<comment type="pathway">
    <text evidence="1">Amino-acid biosynthesis; L-lysine biosynthesis via DAP pathway; DL-2,6-diaminopimelate from LL-2,6-diaminopimelate: step 1/1.</text>
</comment>
<comment type="subunit">
    <text evidence="1">Homodimer.</text>
</comment>
<comment type="subcellular location">
    <subcellularLocation>
        <location evidence="1">Cytoplasm</location>
    </subcellularLocation>
</comment>
<comment type="similarity">
    <text evidence="1">Belongs to the diaminopimelate epimerase family.</text>
</comment>
<gene>
    <name evidence="1" type="primary">dapF</name>
    <name type="ordered locus">VIBHAR_00309</name>
</gene>
<name>DAPF_VIBC1</name>